<comment type="function">
    <text evidence="1">Oxidative deamination of D-amino acids.</text>
</comment>
<comment type="catalytic activity">
    <reaction evidence="1">
        <text>a D-alpha-amino acid + A + H2O = a 2-oxocarboxylate + AH2 + NH4(+)</text>
        <dbReference type="Rhea" id="RHEA:18125"/>
        <dbReference type="ChEBI" id="CHEBI:13193"/>
        <dbReference type="ChEBI" id="CHEBI:15377"/>
        <dbReference type="ChEBI" id="CHEBI:17499"/>
        <dbReference type="ChEBI" id="CHEBI:28938"/>
        <dbReference type="ChEBI" id="CHEBI:35179"/>
        <dbReference type="ChEBI" id="CHEBI:59871"/>
    </reaction>
</comment>
<comment type="cofactor">
    <cofactor evidence="1">
        <name>FAD</name>
        <dbReference type="ChEBI" id="CHEBI:57692"/>
    </cofactor>
</comment>
<comment type="pathway">
    <text>Amino-acid degradation; D-alanine degradation; NH(3) and pyruvate from D-alanine: step 1/1.</text>
</comment>
<comment type="similarity">
    <text evidence="1">Belongs to the DadA oxidoreductase family.</text>
</comment>
<evidence type="ECO:0000255" key="1">
    <source>
        <dbReference type="HAMAP-Rule" id="MF_01202"/>
    </source>
</evidence>
<keyword id="KW-0274">FAD</keyword>
<keyword id="KW-0285">Flavoprotein</keyword>
<keyword id="KW-0560">Oxidoreductase</keyword>
<keyword id="KW-1185">Reference proteome</keyword>
<dbReference type="EC" id="1.4.99.-" evidence="1"/>
<dbReference type="EMBL" id="CU468135">
    <property type="protein sequence ID" value="CAO96590.1"/>
    <property type="molecule type" value="Genomic_DNA"/>
</dbReference>
<dbReference type="RefSeq" id="WP_012441283.1">
    <property type="nucleotide sequence ID" value="NC_010694.1"/>
</dbReference>
<dbReference type="SMR" id="B2VJ51"/>
<dbReference type="STRING" id="465817.ETA_15440"/>
<dbReference type="KEGG" id="eta:ETA_15440"/>
<dbReference type="eggNOG" id="COG0665">
    <property type="taxonomic scope" value="Bacteria"/>
</dbReference>
<dbReference type="HOGENOM" id="CLU_007884_9_2_6"/>
<dbReference type="OrthoDB" id="9805337at2"/>
<dbReference type="UniPathway" id="UPA00043">
    <property type="reaction ID" value="UER00498"/>
</dbReference>
<dbReference type="Proteomes" id="UP000001726">
    <property type="component" value="Chromosome"/>
</dbReference>
<dbReference type="GO" id="GO:0005737">
    <property type="term" value="C:cytoplasm"/>
    <property type="evidence" value="ECO:0007669"/>
    <property type="project" value="TreeGrafter"/>
</dbReference>
<dbReference type="GO" id="GO:0005886">
    <property type="term" value="C:plasma membrane"/>
    <property type="evidence" value="ECO:0007669"/>
    <property type="project" value="TreeGrafter"/>
</dbReference>
<dbReference type="GO" id="GO:0008718">
    <property type="term" value="F:D-amino-acid dehydrogenase activity"/>
    <property type="evidence" value="ECO:0007669"/>
    <property type="project" value="UniProtKB-UniRule"/>
</dbReference>
<dbReference type="GO" id="GO:0055130">
    <property type="term" value="P:D-alanine catabolic process"/>
    <property type="evidence" value="ECO:0007669"/>
    <property type="project" value="UniProtKB-UniPathway"/>
</dbReference>
<dbReference type="FunFam" id="3.50.50.60:FF:000020">
    <property type="entry name" value="D-amino acid dehydrogenase"/>
    <property type="match status" value="1"/>
</dbReference>
<dbReference type="Gene3D" id="3.30.9.10">
    <property type="entry name" value="D-Amino Acid Oxidase, subunit A, domain 2"/>
    <property type="match status" value="1"/>
</dbReference>
<dbReference type="Gene3D" id="3.50.50.60">
    <property type="entry name" value="FAD/NAD(P)-binding domain"/>
    <property type="match status" value="2"/>
</dbReference>
<dbReference type="HAMAP" id="MF_01202">
    <property type="entry name" value="DadA"/>
    <property type="match status" value="1"/>
</dbReference>
<dbReference type="InterPro" id="IPR023080">
    <property type="entry name" value="DadA"/>
</dbReference>
<dbReference type="InterPro" id="IPR006076">
    <property type="entry name" value="FAD-dep_OxRdtase"/>
</dbReference>
<dbReference type="InterPro" id="IPR036188">
    <property type="entry name" value="FAD/NAD-bd_sf"/>
</dbReference>
<dbReference type="NCBIfam" id="NF001933">
    <property type="entry name" value="PRK00711.1"/>
    <property type="match status" value="1"/>
</dbReference>
<dbReference type="PANTHER" id="PTHR13847:SF280">
    <property type="entry name" value="D-AMINO ACID DEHYDROGENASE"/>
    <property type="match status" value="1"/>
</dbReference>
<dbReference type="PANTHER" id="PTHR13847">
    <property type="entry name" value="SARCOSINE DEHYDROGENASE-RELATED"/>
    <property type="match status" value="1"/>
</dbReference>
<dbReference type="Pfam" id="PF01266">
    <property type="entry name" value="DAO"/>
    <property type="match status" value="1"/>
</dbReference>
<dbReference type="SUPFAM" id="SSF54373">
    <property type="entry name" value="FAD-linked reductases, C-terminal domain"/>
    <property type="match status" value="1"/>
</dbReference>
<dbReference type="SUPFAM" id="SSF51905">
    <property type="entry name" value="FAD/NAD(P)-binding domain"/>
    <property type="match status" value="1"/>
</dbReference>
<name>DADA_ERWT9</name>
<feature type="chain" id="PRO_1000138654" description="D-amino acid dehydrogenase">
    <location>
        <begin position="1"/>
        <end position="433"/>
    </location>
</feature>
<feature type="binding site" evidence="1">
    <location>
        <begin position="3"/>
        <end position="17"/>
    </location>
    <ligand>
        <name>FAD</name>
        <dbReference type="ChEBI" id="CHEBI:57692"/>
    </ligand>
</feature>
<accession>B2VJ51</accession>
<gene>
    <name evidence="1" type="primary">dadA</name>
    <name type="ordered locus">ETA_15440</name>
</gene>
<protein>
    <recommendedName>
        <fullName evidence="1">D-amino acid dehydrogenase</fullName>
        <ecNumber evidence="1">1.4.99.-</ecNumber>
    </recommendedName>
</protein>
<proteinExistence type="inferred from homology"/>
<reference key="1">
    <citation type="journal article" date="2008" name="Environ. Microbiol.">
        <title>The genome of Erwinia tasmaniensis strain Et1/99, a non-pathogenic bacterium in the genus Erwinia.</title>
        <authorList>
            <person name="Kube M."/>
            <person name="Migdoll A.M."/>
            <person name="Mueller I."/>
            <person name="Kuhl H."/>
            <person name="Beck A."/>
            <person name="Reinhardt R."/>
            <person name="Geider K."/>
        </authorList>
    </citation>
    <scope>NUCLEOTIDE SEQUENCE [LARGE SCALE GENOMIC DNA]</scope>
    <source>
        <strain>DSM 17950 / CFBP 7177 / CIP 109463 / NCPPB 4357 / Et1/99</strain>
    </source>
</reference>
<sequence length="433" mass="47169">MRVVILGSGVVGVASAWYLAQAGHEVTVIDRQPAPALETSAGNAGQISPGYAAPWAAPGVPLKAVKWMFQRHAPLAIRLDGSRYQLEWMWQMLRNCDMRHYQQNKSRMVRIAEYSRDCLKALREQTGIAYEGRQGGTLQLFRTAQQFESAAKDIAVLREAGVPYQLLEAAQLIEAEPALAASQHKLSGGLRLPNDETGDCQLFTQRLAEMAMAAGVHFRFNTPVDALLQDANQICGVQCGSERVTADAYVVALGSFSTELLNHIVKIPVYPLKGYSLTIPITDEKAAPLSTVLDETYKVAITRFDNRIRVGGMAEIVGFNTQLLPARRKTLEMVVRDLYPHGGDIGRATFWSGLRPMTPDGTPVVGRTPLKNLYLNTGHGTLGWTMACGSGQLLADIISGRTPAISADDLSVIRYLPGFYPAPVRALHGVNVG</sequence>
<organism>
    <name type="scientific">Erwinia tasmaniensis (strain DSM 17950 / CFBP 7177 / CIP 109463 / NCPPB 4357 / Et1/99)</name>
    <dbReference type="NCBI Taxonomy" id="465817"/>
    <lineage>
        <taxon>Bacteria</taxon>
        <taxon>Pseudomonadati</taxon>
        <taxon>Pseudomonadota</taxon>
        <taxon>Gammaproteobacteria</taxon>
        <taxon>Enterobacterales</taxon>
        <taxon>Erwiniaceae</taxon>
        <taxon>Erwinia</taxon>
    </lineage>
</organism>